<dbReference type="EMBL" id="AB001488">
    <property type="protein sequence ID" value="BAA19377.1"/>
    <property type="molecule type" value="Genomic_DNA"/>
</dbReference>
<dbReference type="EMBL" id="AL009126">
    <property type="protein sequence ID" value="CAB12350.1"/>
    <property type="molecule type" value="Genomic_DNA"/>
</dbReference>
<dbReference type="PIR" id="H69780">
    <property type="entry name" value="H69780"/>
</dbReference>
<dbReference type="RefSeq" id="NP_388424.1">
    <property type="nucleotide sequence ID" value="NC_000964.3"/>
</dbReference>
<dbReference type="RefSeq" id="WP_003243548.1">
    <property type="nucleotide sequence ID" value="NZ_OZ025638.1"/>
</dbReference>
<dbReference type="SMR" id="P96687"/>
<dbReference type="FunCoup" id="P96687">
    <property type="interactions" value="208"/>
</dbReference>
<dbReference type="STRING" id="224308.BSU05430"/>
<dbReference type="PaxDb" id="224308-BSU05430"/>
<dbReference type="EnsemblBacteria" id="CAB12350">
    <property type="protein sequence ID" value="CAB12350"/>
    <property type="gene ID" value="BSU_05430"/>
</dbReference>
<dbReference type="GeneID" id="939901"/>
<dbReference type="KEGG" id="bsu:BSU05430"/>
<dbReference type="PATRIC" id="fig|224308.179.peg.582"/>
<dbReference type="eggNOG" id="COG2409">
    <property type="taxonomic scope" value="Bacteria"/>
</dbReference>
<dbReference type="InParanoid" id="P96687"/>
<dbReference type="OrthoDB" id="7051771at2"/>
<dbReference type="PhylomeDB" id="P96687"/>
<dbReference type="BioCyc" id="BSUB:BSU05430-MONOMER"/>
<dbReference type="Proteomes" id="UP000001570">
    <property type="component" value="Chromosome"/>
</dbReference>
<dbReference type="GO" id="GO:0005886">
    <property type="term" value="C:plasma membrane"/>
    <property type="evidence" value="ECO:0007669"/>
    <property type="project" value="UniProtKB-SubCell"/>
</dbReference>
<dbReference type="Gene3D" id="1.20.1640.10">
    <property type="entry name" value="Multidrug efflux transporter AcrB transmembrane domain"/>
    <property type="match status" value="2"/>
</dbReference>
<dbReference type="InterPro" id="IPR004869">
    <property type="entry name" value="MMPL_dom"/>
</dbReference>
<dbReference type="InterPro" id="IPR050545">
    <property type="entry name" value="Mycobact_MmpL"/>
</dbReference>
<dbReference type="InterPro" id="IPR000731">
    <property type="entry name" value="SSD"/>
</dbReference>
<dbReference type="PANTHER" id="PTHR33406">
    <property type="entry name" value="MEMBRANE PROTEIN MJ1562-RELATED"/>
    <property type="match status" value="1"/>
</dbReference>
<dbReference type="PANTHER" id="PTHR33406:SF13">
    <property type="entry name" value="MEMBRANE PROTEIN YDFJ"/>
    <property type="match status" value="1"/>
</dbReference>
<dbReference type="Pfam" id="PF03176">
    <property type="entry name" value="MMPL"/>
    <property type="match status" value="2"/>
</dbReference>
<dbReference type="SUPFAM" id="SSF82866">
    <property type="entry name" value="Multidrug efflux transporter AcrB transmembrane domain"/>
    <property type="match status" value="2"/>
</dbReference>
<dbReference type="PROSITE" id="PS50156">
    <property type="entry name" value="SSD"/>
    <property type="match status" value="1"/>
</dbReference>
<comment type="subcellular location">
    <subcellularLocation>
        <location evidence="3">Cell membrane</location>
        <topology evidence="3">Multi-pass membrane protein</topology>
    </subcellularLocation>
</comment>
<comment type="induction">
    <text evidence="2">Regulated by the two-component regulatory system YdfH/YdfI.</text>
</comment>
<comment type="similarity">
    <text evidence="3">Belongs to the resistance-nodulation-cell division (RND) (TC 2.A.6) family. MmpL subfamily.</text>
</comment>
<organism>
    <name type="scientific">Bacillus subtilis (strain 168)</name>
    <dbReference type="NCBI Taxonomy" id="224308"/>
    <lineage>
        <taxon>Bacteria</taxon>
        <taxon>Bacillati</taxon>
        <taxon>Bacillota</taxon>
        <taxon>Bacilli</taxon>
        <taxon>Bacillales</taxon>
        <taxon>Bacillaceae</taxon>
        <taxon>Bacillus</taxon>
    </lineage>
</organism>
<name>YDFJ_BACSU</name>
<proteinExistence type="evidence at transcript level"/>
<accession>P96687</accession>
<accession>Q797G4</accession>
<sequence>MSKMLYTLGGWVARNRIKAICAWIVVLVAAIGLAVTLKPSFSEDMSIPDTPSEKAMDVIQKEFPHGPDKGSIRVIFGAGDGEKLTGKPAKKAIEDTFKEISKDDSVDSIASPFVTGTIAKDGTVAYADIQYKSSADDIKDYSIKHLKDSLKMADDEGLQTELSGDVPGAEMEIGGVSEIVGIILAFVVLAITFGSLLIAGLPILTALIGLGVSIGLVLIGTQVFDIASVSLSLAGMIGLAVGIDYALFIFTKHRQFLGEGIQKNESIARAVGTAGSAVVFAGLTVIVALCGLTVVNIPFMSAMGLTAGLSVLMAVLASITLVPAVLSIAGKRMIPKSNKKIEKQSTETNVWGRFVTKNPIMLSVCSILILIVISIPSMHLELGLPDAGMKAKDNPDRRAYDLLAEGFGEGFNGQLTIVADATNATENKAEAFADAVKEIKGLDHVASVTPAMPNKEGNFAIITVVPETGPNDVTTKDLVHDVRSLSDKNGVDLLVTGSTAVNIDISDRLNDAIPVFAVLIVGFAFVLLTIVFRSLLVPLVAVAGFMLTMTATLGICVFVLQDGNLIDFFKIPEKGPILAFLPILSIGILFGLAMDYQVFLVSRMREEYVKTNNPVQAIQAGLKHSGPVVTAAGLIMIFVFAGFIFAGEASIKANGLALSFGVLFDAFIVRMTLIPSVMKLMGNAAWYLPKWLDKIIPNVDIEGHQLTKEIQPEIDHEQKKQISV</sequence>
<evidence type="ECO:0000255" key="1"/>
<evidence type="ECO:0000269" key="2">
    <source>
    </source>
</evidence>
<evidence type="ECO:0000305" key="3"/>
<gene>
    <name type="primary">ydfJ</name>
    <name type="ordered locus">BSU05430</name>
</gene>
<feature type="chain" id="PRO_0000103585" description="Membrane protein YdfJ">
    <location>
        <begin position="1"/>
        <end position="724"/>
    </location>
</feature>
<feature type="transmembrane region" description="Helical" evidence="1">
    <location>
        <begin position="17"/>
        <end position="37"/>
    </location>
</feature>
<feature type="transmembrane region" description="Helical" evidence="1">
    <location>
        <begin position="179"/>
        <end position="199"/>
    </location>
</feature>
<feature type="transmembrane region" description="Helical" evidence="1">
    <location>
        <begin position="200"/>
        <end position="220"/>
    </location>
</feature>
<feature type="transmembrane region" description="Helical" evidence="1">
    <location>
        <begin position="231"/>
        <end position="251"/>
    </location>
</feature>
<feature type="transmembrane region" description="Helical" evidence="1">
    <location>
        <begin position="277"/>
        <end position="297"/>
    </location>
</feature>
<feature type="transmembrane region" description="Helical" evidence="1">
    <location>
        <begin position="309"/>
        <end position="329"/>
    </location>
</feature>
<feature type="transmembrane region" description="Helical" evidence="1">
    <location>
        <begin position="360"/>
        <end position="380"/>
    </location>
</feature>
<feature type="transmembrane region" description="Helical" evidence="1">
    <location>
        <begin position="512"/>
        <end position="532"/>
    </location>
</feature>
<feature type="transmembrane region" description="Helical" evidence="1">
    <location>
        <begin position="539"/>
        <end position="559"/>
    </location>
</feature>
<feature type="transmembrane region" description="Helical" evidence="1">
    <location>
        <begin position="575"/>
        <end position="595"/>
    </location>
</feature>
<feature type="transmembrane region" description="Helical" evidence="1">
    <location>
        <begin position="627"/>
        <end position="647"/>
    </location>
</feature>
<feature type="transmembrane region" description="Helical" evidence="1">
    <location>
        <begin position="655"/>
        <end position="675"/>
    </location>
</feature>
<protein>
    <recommendedName>
        <fullName>Membrane protein YdfJ</fullName>
    </recommendedName>
</protein>
<keyword id="KW-1003">Cell membrane</keyword>
<keyword id="KW-0472">Membrane</keyword>
<keyword id="KW-1185">Reference proteome</keyword>
<keyword id="KW-0812">Transmembrane</keyword>
<keyword id="KW-1133">Transmembrane helix</keyword>
<reference key="1">
    <citation type="submission" date="1997-03" db="EMBL/GenBank/DDBJ databases">
        <title>A 148 kbp sequence of the region between 35 and 47 degree of the Bacillus subtilis genome.</title>
        <authorList>
            <person name="Kasahara Y."/>
            <person name="Nakai S."/>
            <person name="Lee S."/>
            <person name="Sadaie Y."/>
            <person name="Ogasawara N."/>
        </authorList>
    </citation>
    <scope>NUCLEOTIDE SEQUENCE [GENOMIC DNA]</scope>
    <source>
        <strain>168</strain>
    </source>
</reference>
<reference key="2">
    <citation type="journal article" date="1997" name="Nature">
        <title>The complete genome sequence of the Gram-positive bacterium Bacillus subtilis.</title>
        <authorList>
            <person name="Kunst F."/>
            <person name="Ogasawara N."/>
            <person name="Moszer I."/>
            <person name="Albertini A.M."/>
            <person name="Alloni G."/>
            <person name="Azevedo V."/>
            <person name="Bertero M.G."/>
            <person name="Bessieres P."/>
            <person name="Bolotin A."/>
            <person name="Borchert S."/>
            <person name="Borriss R."/>
            <person name="Boursier L."/>
            <person name="Brans A."/>
            <person name="Braun M."/>
            <person name="Brignell S.C."/>
            <person name="Bron S."/>
            <person name="Brouillet S."/>
            <person name="Bruschi C.V."/>
            <person name="Caldwell B."/>
            <person name="Capuano V."/>
            <person name="Carter N.M."/>
            <person name="Choi S.-K."/>
            <person name="Codani J.-J."/>
            <person name="Connerton I.F."/>
            <person name="Cummings N.J."/>
            <person name="Daniel R.A."/>
            <person name="Denizot F."/>
            <person name="Devine K.M."/>
            <person name="Duesterhoeft A."/>
            <person name="Ehrlich S.D."/>
            <person name="Emmerson P.T."/>
            <person name="Entian K.-D."/>
            <person name="Errington J."/>
            <person name="Fabret C."/>
            <person name="Ferrari E."/>
            <person name="Foulger D."/>
            <person name="Fritz C."/>
            <person name="Fujita M."/>
            <person name="Fujita Y."/>
            <person name="Fuma S."/>
            <person name="Galizzi A."/>
            <person name="Galleron N."/>
            <person name="Ghim S.-Y."/>
            <person name="Glaser P."/>
            <person name="Goffeau A."/>
            <person name="Golightly E.J."/>
            <person name="Grandi G."/>
            <person name="Guiseppi G."/>
            <person name="Guy B.J."/>
            <person name="Haga K."/>
            <person name="Haiech J."/>
            <person name="Harwood C.R."/>
            <person name="Henaut A."/>
            <person name="Hilbert H."/>
            <person name="Holsappel S."/>
            <person name="Hosono S."/>
            <person name="Hullo M.-F."/>
            <person name="Itaya M."/>
            <person name="Jones L.-M."/>
            <person name="Joris B."/>
            <person name="Karamata D."/>
            <person name="Kasahara Y."/>
            <person name="Klaerr-Blanchard M."/>
            <person name="Klein C."/>
            <person name="Kobayashi Y."/>
            <person name="Koetter P."/>
            <person name="Koningstein G."/>
            <person name="Krogh S."/>
            <person name="Kumano M."/>
            <person name="Kurita K."/>
            <person name="Lapidus A."/>
            <person name="Lardinois S."/>
            <person name="Lauber J."/>
            <person name="Lazarevic V."/>
            <person name="Lee S.-M."/>
            <person name="Levine A."/>
            <person name="Liu H."/>
            <person name="Masuda S."/>
            <person name="Mauel C."/>
            <person name="Medigue C."/>
            <person name="Medina N."/>
            <person name="Mellado R.P."/>
            <person name="Mizuno M."/>
            <person name="Moestl D."/>
            <person name="Nakai S."/>
            <person name="Noback M."/>
            <person name="Noone D."/>
            <person name="O'Reilly M."/>
            <person name="Ogawa K."/>
            <person name="Ogiwara A."/>
            <person name="Oudega B."/>
            <person name="Park S.-H."/>
            <person name="Parro V."/>
            <person name="Pohl T.M."/>
            <person name="Portetelle D."/>
            <person name="Porwollik S."/>
            <person name="Prescott A.M."/>
            <person name="Presecan E."/>
            <person name="Pujic P."/>
            <person name="Purnelle B."/>
            <person name="Rapoport G."/>
            <person name="Rey M."/>
            <person name="Reynolds S."/>
            <person name="Rieger M."/>
            <person name="Rivolta C."/>
            <person name="Rocha E."/>
            <person name="Roche B."/>
            <person name="Rose M."/>
            <person name="Sadaie Y."/>
            <person name="Sato T."/>
            <person name="Scanlan E."/>
            <person name="Schleich S."/>
            <person name="Schroeter R."/>
            <person name="Scoffone F."/>
            <person name="Sekiguchi J."/>
            <person name="Sekowska A."/>
            <person name="Seror S.J."/>
            <person name="Serror P."/>
            <person name="Shin B.-S."/>
            <person name="Soldo B."/>
            <person name="Sorokin A."/>
            <person name="Tacconi E."/>
            <person name="Takagi T."/>
            <person name="Takahashi H."/>
            <person name="Takemaru K."/>
            <person name="Takeuchi M."/>
            <person name="Tamakoshi A."/>
            <person name="Tanaka T."/>
            <person name="Terpstra P."/>
            <person name="Tognoni A."/>
            <person name="Tosato V."/>
            <person name="Uchiyama S."/>
            <person name="Vandenbol M."/>
            <person name="Vannier F."/>
            <person name="Vassarotti A."/>
            <person name="Viari A."/>
            <person name="Wambutt R."/>
            <person name="Wedler E."/>
            <person name="Wedler H."/>
            <person name="Weitzenegger T."/>
            <person name="Winters P."/>
            <person name="Wipat A."/>
            <person name="Yamamoto H."/>
            <person name="Yamane K."/>
            <person name="Yasumoto K."/>
            <person name="Yata K."/>
            <person name="Yoshida K."/>
            <person name="Yoshikawa H.-F."/>
            <person name="Zumstein E."/>
            <person name="Yoshikawa H."/>
            <person name="Danchin A."/>
        </authorList>
    </citation>
    <scope>NUCLEOTIDE SEQUENCE [LARGE SCALE GENOMIC DNA]</scope>
    <source>
        <strain>168</strain>
    </source>
</reference>
<reference key="3">
    <citation type="journal article" date="2005" name="Microbiology">
        <title>The Bacillus subtilis YdfHI two-component system regulates the transcription of ydfJ, a member of the RND superfamily.</title>
        <authorList>
            <person name="Serizawa M."/>
            <person name="Sekiguchi J."/>
        </authorList>
    </citation>
    <scope>TRANSCRIPTIONAL REGULATION</scope>
    <source>
        <strain>168</strain>
    </source>
</reference>